<feature type="chain" id="PRO_0000099849" description="Amine oxidase [flavin-containing] A">
    <location>
        <begin position="1"/>
        <end position="527"/>
    </location>
</feature>
<feature type="topological domain" description="Cytoplasmic" evidence="1">
    <location>
        <begin position="1"/>
        <end position="497"/>
    </location>
</feature>
<feature type="transmembrane region" description="Helical; Anchor for type IV membrane protein" evidence="1">
    <location>
        <begin position="498"/>
        <end position="518"/>
    </location>
</feature>
<feature type="topological domain" description="Mitochondrial intermembrane" evidence="1">
    <location>
        <begin position="519"/>
        <end position="527"/>
    </location>
</feature>
<feature type="region of interest" description="Interaction with membrane phospholipid headgroups" evidence="1">
    <location>
        <begin position="520"/>
        <end position="522"/>
    </location>
</feature>
<feature type="site" description="Important for substrate specificity" evidence="1">
    <location>
        <position position="335"/>
    </location>
</feature>
<feature type="site" description="Important for catalytic activity" evidence="1">
    <location>
        <position position="374"/>
    </location>
</feature>
<feature type="modified residue" description="N-acetylmethionine" evidence="3">
    <location>
        <position position="1"/>
    </location>
</feature>
<feature type="modified residue" description="Phosphoserine" evidence="2">
    <location>
        <position position="383"/>
    </location>
</feature>
<feature type="modified residue" description="S-8alpha-FAD cysteine" evidence="3">
    <location>
        <position position="406"/>
    </location>
</feature>
<accession>Q5NU32</accession>
<comment type="function">
    <text evidence="2">Catalyzes the oxidative deamination of primary and some secondary amine such as neurotransmitters, with concomitant reduction of oxygen to hydrogen peroxide and has important functions in the metabolism of neuroactive and vasoactive amines in the central nervous system and peripheral tissues. Preferentially oxidizes serotonin. Also catalyzes the oxidative deamination of kynuramine to 3-(2-aminophenyl)-3-oxopropanal that can spontaneously condense to 4-hydroxyquinoline.</text>
</comment>
<comment type="catalytic activity">
    <reaction evidence="2">
        <text>a secondary aliphatic amine + O2 + H2O = a primary amine + an aldehyde + H2O2</text>
        <dbReference type="Rhea" id="RHEA:26414"/>
        <dbReference type="ChEBI" id="CHEBI:15377"/>
        <dbReference type="ChEBI" id="CHEBI:15379"/>
        <dbReference type="ChEBI" id="CHEBI:16240"/>
        <dbReference type="ChEBI" id="CHEBI:17478"/>
        <dbReference type="ChEBI" id="CHEBI:58855"/>
        <dbReference type="ChEBI" id="CHEBI:65296"/>
        <dbReference type="EC" id="1.4.3.4"/>
    </reaction>
</comment>
<comment type="catalytic activity">
    <reaction evidence="2">
        <text>a primary methyl amine + O2 + H2O = an aldehyde + H2O2 + NH4(+)</text>
        <dbReference type="Rhea" id="RHEA:16153"/>
        <dbReference type="ChEBI" id="CHEBI:15377"/>
        <dbReference type="ChEBI" id="CHEBI:15379"/>
        <dbReference type="ChEBI" id="CHEBI:16240"/>
        <dbReference type="ChEBI" id="CHEBI:17478"/>
        <dbReference type="ChEBI" id="CHEBI:28938"/>
        <dbReference type="ChEBI" id="CHEBI:228804"/>
        <dbReference type="EC" id="1.4.3.21"/>
    </reaction>
</comment>
<comment type="catalytic activity">
    <reaction evidence="2">
        <text>(R)-adrenaline + O2 + H2O = (R)-3,4-dihydroxymandelaldehyde + methylamine + H2O2</text>
        <dbReference type="Rhea" id="RHEA:51168"/>
        <dbReference type="ChEBI" id="CHEBI:15377"/>
        <dbReference type="ChEBI" id="CHEBI:15379"/>
        <dbReference type="ChEBI" id="CHEBI:16240"/>
        <dbReference type="ChEBI" id="CHEBI:59338"/>
        <dbReference type="ChEBI" id="CHEBI:71406"/>
        <dbReference type="ChEBI" id="CHEBI:180943"/>
    </reaction>
</comment>
<comment type="catalytic activity">
    <reaction evidence="2">
        <text>dopamine + O2 + H2O = 3,4-dihydroxyphenylacetaldehyde + H2O2 + NH4(+)</text>
        <dbReference type="Rhea" id="RHEA:27946"/>
        <dbReference type="ChEBI" id="CHEBI:15377"/>
        <dbReference type="ChEBI" id="CHEBI:15379"/>
        <dbReference type="ChEBI" id="CHEBI:16240"/>
        <dbReference type="ChEBI" id="CHEBI:27978"/>
        <dbReference type="ChEBI" id="CHEBI:28938"/>
        <dbReference type="ChEBI" id="CHEBI:59905"/>
    </reaction>
</comment>
<comment type="catalytic activity">
    <reaction evidence="2">
        <text>tyramine + O2 + H2O = (4-hydroxyphenyl)acetaldehyde + H2O2 + NH4(+)</text>
        <dbReference type="Rhea" id="RHEA:30591"/>
        <dbReference type="ChEBI" id="CHEBI:15377"/>
        <dbReference type="ChEBI" id="CHEBI:15379"/>
        <dbReference type="ChEBI" id="CHEBI:15621"/>
        <dbReference type="ChEBI" id="CHEBI:16240"/>
        <dbReference type="ChEBI" id="CHEBI:28938"/>
        <dbReference type="ChEBI" id="CHEBI:327995"/>
    </reaction>
</comment>
<comment type="catalytic activity">
    <reaction evidence="2">
        <text>(R)-noradrenaline + O2 + H2O = (R)-3,4-dihydroxymandelaldehyde + H2O2 + NH4(+)</text>
        <dbReference type="Rhea" id="RHEA:69076"/>
        <dbReference type="ChEBI" id="CHEBI:15377"/>
        <dbReference type="ChEBI" id="CHEBI:15379"/>
        <dbReference type="ChEBI" id="CHEBI:16240"/>
        <dbReference type="ChEBI" id="CHEBI:28938"/>
        <dbReference type="ChEBI" id="CHEBI:72587"/>
        <dbReference type="ChEBI" id="CHEBI:180943"/>
    </reaction>
</comment>
<comment type="catalytic activity">
    <reaction evidence="2">
        <text>serotonin + O2 + H2O = (5-hydroxyindol-3-yl)acetaldehyde + H2O2 + NH4(+)</text>
        <dbReference type="Rhea" id="RHEA:69072"/>
        <dbReference type="ChEBI" id="CHEBI:15377"/>
        <dbReference type="ChEBI" id="CHEBI:15379"/>
        <dbReference type="ChEBI" id="CHEBI:16240"/>
        <dbReference type="ChEBI" id="CHEBI:28938"/>
        <dbReference type="ChEBI" id="CHEBI:50157"/>
        <dbReference type="ChEBI" id="CHEBI:350546"/>
    </reaction>
</comment>
<comment type="catalytic activity">
    <reaction evidence="2">
        <text>kynuramine + O2 + H2O = 3-(2-aminophenyl)-3-oxopropanal + H2O2 + NH4(+)</text>
        <dbReference type="Rhea" id="RHEA:59596"/>
        <dbReference type="ChEBI" id="CHEBI:15377"/>
        <dbReference type="ChEBI" id="CHEBI:15379"/>
        <dbReference type="ChEBI" id="CHEBI:16240"/>
        <dbReference type="ChEBI" id="CHEBI:28938"/>
        <dbReference type="ChEBI" id="CHEBI:180898"/>
        <dbReference type="ChEBI" id="CHEBI:180899"/>
    </reaction>
    <physiologicalReaction direction="left-to-right" evidence="2">
        <dbReference type="Rhea" id="RHEA:59597"/>
    </physiologicalReaction>
</comment>
<comment type="catalytic activity">
    <reaction evidence="2">
        <text>tryptamine + O2 + H2O = indole-3-acetaldehyde + H2O2 + NH4(+)</text>
        <dbReference type="Rhea" id="RHEA:59416"/>
        <dbReference type="ChEBI" id="CHEBI:15377"/>
        <dbReference type="ChEBI" id="CHEBI:15379"/>
        <dbReference type="ChEBI" id="CHEBI:16240"/>
        <dbReference type="ChEBI" id="CHEBI:18086"/>
        <dbReference type="ChEBI" id="CHEBI:28938"/>
        <dbReference type="ChEBI" id="CHEBI:57887"/>
    </reaction>
</comment>
<comment type="catalytic activity">
    <reaction evidence="2">
        <text>2-phenylethylamine + O2 + H2O = 2-phenylacetaldehyde + H2O2 + NH4(+)</text>
        <dbReference type="Rhea" id="RHEA:25265"/>
        <dbReference type="ChEBI" id="CHEBI:15377"/>
        <dbReference type="ChEBI" id="CHEBI:15379"/>
        <dbReference type="ChEBI" id="CHEBI:16240"/>
        <dbReference type="ChEBI" id="CHEBI:16424"/>
        <dbReference type="ChEBI" id="CHEBI:28938"/>
        <dbReference type="ChEBI" id="CHEBI:225237"/>
    </reaction>
</comment>
<comment type="cofactor">
    <cofactor evidence="3">
        <name>FAD</name>
        <dbReference type="ChEBI" id="CHEBI:57692"/>
    </cofactor>
</comment>
<comment type="subunit">
    <text evidence="3">Monomer, homo- or heterodimer (containing two subunits of similar size). Each subunit contains a covalently bound flavin. Enzymatically active as monomer (By similarity).</text>
</comment>
<comment type="subcellular location">
    <subcellularLocation>
        <location evidence="2">Mitochondrion outer membrane</location>
        <topology evidence="2">Single-pass type IV membrane protein</topology>
        <orientation evidence="2">Cytoplasmic side</orientation>
    </subcellularLocation>
</comment>
<comment type="similarity">
    <text evidence="4">Belongs to the flavin monoamine oxidase family.</text>
</comment>
<name>AOFA_HORSE</name>
<sequence>MASQEKASMAGHMFDVVVIGGGISGLSAAKLLAEHETNVLVLEARDRVGGRTYTVRNKHVNYVDVGGAYVGPTQNRILRLSKELGLETYKVNVNERLVQYVKGKSYPFRGAFPPVWNPIAYLDYNNLWRTMDNMGKEIPADAPWEAPHAEEWDKMTMKDLIDKICWTKTARQFASLFVNINVTSEPHQVSALWFLWYVKQCGGTTRIFSITNGGQERKFVGGSGQVSERIMELLGDRVKLEHPVTYVDQSGDNIIVETLNHEHFECKYVISAIPPALTAKIHFKPELPSERNQLIQRLPMGAIIKCMMYYKEAFWKKKDYCGSMIIEDEEAPISITLDDSKPDGSLPAIMGFILARKADRLAKLHKEMRKKKICELYAKVLGSQEALQPVHYEEKNWCEEQYSGGCYTAYFPPGIMTQYGRVIRQPVGRIYFAGTETATRWSGYMEGAVEAGERAAREILNALGKVAEKDIWLQEPESKDVPAVEITHSFWERNLPSVGGLLKIIGFSTSITALWIVVYKFKLLTRS</sequence>
<protein>
    <recommendedName>
        <fullName evidence="3">Amine oxidase [flavin-containing] A</fullName>
        <ecNumber evidence="2">1.4.3.21</ecNumber>
        <ecNumber evidence="2">1.4.3.4</ecNumber>
    </recommendedName>
    <alternativeName>
        <fullName>Monoamine oxidase type A</fullName>
        <shortName>MAO-A</shortName>
    </alternativeName>
</protein>
<gene>
    <name evidence="3" type="primary">MAOA</name>
</gene>
<keyword id="KW-0007">Acetylation</keyword>
<keyword id="KW-0128">Catecholamine metabolism</keyword>
<keyword id="KW-0274">FAD</keyword>
<keyword id="KW-0285">Flavoprotein</keyword>
<keyword id="KW-0472">Membrane</keyword>
<keyword id="KW-0496">Mitochondrion</keyword>
<keyword id="KW-1000">Mitochondrion outer membrane</keyword>
<keyword id="KW-0531">Neurotransmitter degradation</keyword>
<keyword id="KW-0560">Oxidoreductase</keyword>
<keyword id="KW-0597">Phosphoprotein</keyword>
<keyword id="KW-1185">Reference proteome</keyword>
<keyword id="KW-0812">Transmembrane</keyword>
<keyword id="KW-1133">Transmembrane helix</keyword>
<reference key="1">
    <citation type="submission" date="2004-04" db="EMBL/GenBank/DDBJ databases">
        <title>Equus caballus monoamine oxidase A (MAOA), mRNA.</title>
        <authorList>
            <person name="Momozawa Y."/>
            <person name="Mori Y."/>
        </authorList>
    </citation>
    <scope>NUCLEOTIDE SEQUENCE [MRNA]</scope>
</reference>
<organism>
    <name type="scientific">Equus caballus</name>
    <name type="common">Horse</name>
    <dbReference type="NCBI Taxonomy" id="9796"/>
    <lineage>
        <taxon>Eukaryota</taxon>
        <taxon>Metazoa</taxon>
        <taxon>Chordata</taxon>
        <taxon>Craniata</taxon>
        <taxon>Vertebrata</taxon>
        <taxon>Euteleostomi</taxon>
        <taxon>Mammalia</taxon>
        <taxon>Eutheria</taxon>
        <taxon>Laurasiatheria</taxon>
        <taxon>Perissodactyla</taxon>
        <taxon>Equidae</taxon>
        <taxon>Equus</taxon>
    </lineage>
</organism>
<dbReference type="EC" id="1.4.3.21" evidence="2"/>
<dbReference type="EC" id="1.4.3.4" evidence="2"/>
<dbReference type="EMBL" id="AB178282">
    <property type="protein sequence ID" value="BAD80721.1"/>
    <property type="molecule type" value="mRNA"/>
</dbReference>
<dbReference type="RefSeq" id="NP_001075301.1">
    <property type="nucleotide sequence ID" value="NM_001081832.1"/>
</dbReference>
<dbReference type="SMR" id="Q5NU32"/>
<dbReference type="FunCoup" id="Q5NU32">
    <property type="interactions" value="593"/>
</dbReference>
<dbReference type="STRING" id="9796.ENSECAP00000043359"/>
<dbReference type="PaxDb" id="9796-ENSECAP00000043359"/>
<dbReference type="PeptideAtlas" id="Q5NU32"/>
<dbReference type="GeneID" id="100033867"/>
<dbReference type="KEGG" id="ecb:100033867"/>
<dbReference type="CTD" id="4128"/>
<dbReference type="HOGENOM" id="CLU_004498_0_1_1"/>
<dbReference type="InParanoid" id="Q5NU32"/>
<dbReference type="OrthoDB" id="7777654at2759"/>
<dbReference type="TreeFam" id="TF313314"/>
<dbReference type="Proteomes" id="UP000002281">
    <property type="component" value="Unplaced"/>
</dbReference>
<dbReference type="GO" id="GO:0005741">
    <property type="term" value="C:mitochondrial outer membrane"/>
    <property type="evidence" value="ECO:0007669"/>
    <property type="project" value="UniProtKB-SubCell"/>
</dbReference>
<dbReference type="GO" id="GO:0005739">
    <property type="term" value="C:mitochondrion"/>
    <property type="evidence" value="ECO:0000318"/>
    <property type="project" value="GO_Central"/>
</dbReference>
<dbReference type="GO" id="GO:0050660">
    <property type="term" value="F:flavin adenine dinucleotide binding"/>
    <property type="evidence" value="ECO:0000318"/>
    <property type="project" value="GO_Central"/>
</dbReference>
<dbReference type="GO" id="GO:0097621">
    <property type="term" value="F:monoamine oxidase activity"/>
    <property type="evidence" value="ECO:0000250"/>
    <property type="project" value="UniProtKB"/>
</dbReference>
<dbReference type="GO" id="GO:0008131">
    <property type="term" value="F:primary methylamine oxidase activity"/>
    <property type="evidence" value="ECO:0000250"/>
    <property type="project" value="UniProtKB"/>
</dbReference>
<dbReference type="GO" id="GO:0006584">
    <property type="term" value="P:catecholamine metabolic process"/>
    <property type="evidence" value="ECO:0007669"/>
    <property type="project" value="UniProtKB-KW"/>
</dbReference>
<dbReference type="FunFam" id="1.10.405.10:FF:000005">
    <property type="entry name" value="Amine oxidase [flavin-containing]"/>
    <property type="match status" value="1"/>
</dbReference>
<dbReference type="Gene3D" id="3.90.660.10">
    <property type="match status" value="2"/>
</dbReference>
<dbReference type="Gene3D" id="6.10.250.130">
    <property type="match status" value="1"/>
</dbReference>
<dbReference type="Gene3D" id="3.50.50.60">
    <property type="entry name" value="FAD/NAD(P)-binding domain"/>
    <property type="match status" value="2"/>
</dbReference>
<dbReference type="InterPro" id="IPR002937">
    <property type="entry name" value="Amino_oxidase"/>
</dbReference>
<dbReference type="InterPro" id="IPR036188">
    <property type="entry name" value="FAD/NAD-bd_sf"/>
</dbReference>
<dbReference type="InterPro" id="IPR001613">
    <property type="entry name" value="Flavin_amine_oxidase"/>
</dbReference>
<dbReference type="InterPro" id="IPR050703">
    <property type="entry name" value="Flavin_MAO"/>
</dbReference>
<dbReference type="PANTHER" id="PTHR43563">
    <property type="entry name" value="AMINE OXIDASE"/>
    <property type="match status" value="1"/>
</dbReference>
<dbReference type="PANTHER" id="PTHR43563:SF11">
    <property type="entry name" value="AMINE OXIDASE [FLAVIN-CONTAINING] A"/>
    <property type="match status" value="1"/>
</dbReference>
<dbReference type="Pfam" id="PF01593">
    <property type="entry name" value="Amino_oxidase"/>
    <property type="match status" value="1"/>
</dbReference>
<dbReference type="PRINTS" id="PR00757">
    <property type="entry name" value="AMINEOXDASEF"/>
</dbReference>
<dbReference type="SUPFAM" id="SSF54373">
    <property type="entry name" value="FAD-linked reductases, C-terminal domain"/>
    <property type="match status" value="1"/>
</dbReference>
<dbReference type="SUPFAM" id="SSF51905">
    <property type="entry name" value="FAD/NAD(P)-binding domain"/>
    <property type="match status" value="1"/>
</dbReference>
<evidence type="ECO:0000250" key="1"/>
<evidence type="ECO:0000250" key="2">
    <source>
        <dbReference type="UniProtKB" id="P21396"/>
    </source>
</evidence>
<evidence type="ECO:0000250" key="3">
    <source>
        <dbReference type="UniProtKB" id="P21397"/>
    </source>
</evidence>
<evidence type="ECO:0000305" key="4"/>
<proteinExistence type="evidence at transcript level"/>